<name>CHEB_BORPE</name>
<protein>
    <recommendedName>
        <fullName evidence="1">Protein-glutamate methylesterase/protein-glutamine glutaminase</fullName>
        <ecNumber evidence="1">3.1.1.61</ecNumber>
        <ecNumber evidence="1">3.5.1.44</ecNumber>
    </recommendedName>
</protein>
<proteinExistence type="inferred from homology"/>
<dbReference type="EC" id="3.1.1.61" evidence="1"/>
<dbReference type="EC" id="3.5.1.44" evidence="1"/>
<dbReference type="EMBL" id="BX640414">
    <property type="protein sequence ID" value="CAE41332.1"/>
    <property type="molecule type" value="Genomic_DNA"/>
</dbReference>
<dbReference type="RefSeq" id="NP_879820.1">
    <property type="nucleotide sequence ID" value="NC_002929.2"/>
</dbReference>
<dbReference type="RefSeq" id="WP_010930146.1">
    <property type="nucleotide sequence ID" value="NZ_CP039022.1"/>
</dbReference>
<dbReference type="SMR" id="Q7VZ94"/>
<dbReference type="STRING" id="257313.BP1032"/>
<dbReference type="PaxDb" id="257313-BP1032"/>
<dbReference type="KEGG" id="bpe:BP1032"/>
<dbReference type="PATRIC" id="fig|257313.5.peg.1103"/>
<dbReference type="eggNOG" id="COG2201">
    <property type="taxonomic scope" value="Bacteria"/>
</dbReference>
<dbReference type="HOGENOM" id="CLU_000445_51_0_4"/>
<dbReference type="Proteomes" id="UP000002676">
    <property type="component" value="Chromosome"/>
</dbReference>
<dbReference type="GO" id="GO:0005737">
    <property type="term" value="C:cytoplasm"/>
    <property type="evidence" value="ECO:0007669"/>
    <property type="project" value="UniProtKB-SubCell"/>
</dbReference>
<dbReference type="GO" id="GO:0000156">
    <property type="term" value="F:phosphorelay response regulator activity"/>
    <property type="evidence" value="ECO:0007669"/>
    <property type="project" value="InterPro"/>
</dbReference>
<dbReference type="GO" id="GO:0008984">
    <property type="term" value="F:protein-glutamate methylesterase activity"/>
    <property type="evidence" value="ECO:0007669"/>
    <property type="project" value="UniProtKB-UniRule"/>
</dbReference>
<dbReference type="GO" id="GO:0050568">
    <property type="term" value="F:protein-glutamine glutaminase activity"/>
    <property type="evidence" value="ECO:0007669"/>
    <property type="project" value="UniProtKB-UniRule"/>
</dbReference>
<dbReference type="GO" id="GO:0006935">
    <property type="term" value="P:chemotaxis"/>
    <property type="evidence" value="ECO:0007669"/>
    <property type="project" value="UniProtKB-UniRule"/>
</dbReference>
<dbReference type="CDD" id="cd16432">
    <property type="entry name" value="CheB_Rec"/>
    <property type="match status" value="1"/>
</dbReference>
<dbReference type="CDD" id="cd17541">
    <property type="entry name" value="REC_CheB-like"/>
    <property type="match status" value="1"/>
</dbReference>
<dbReference type="FunFam" id="3.40.50.180:FF:000001">
    <property type="entry name" value="Protein-glutamate methylesterase/protein-glutamine glutaminase"/>
    <property type="match status" value="1"/>
</dbReference>
<dbReference type="FunFam" id="3.40.50.2300:FF:000060">
    <property type="entry name" value="Protein-glutamate methylesterase/protein-glutamine glutaminase"/>
    <property type="match status" value="1"/>
</dbReference>
<dbReference type="Gene3D" id="3.40.50.2300">
    <property type="match status" value="1"/>
</dbReference>
<dbReference type="Gene3D" id="3.40.50.180">
    <property type="entry name" value="Methylesterase CheB, C-terminal domain"/>
    <property type="match status" value="1"/>
</dbReference>
<dbReference type="HAMAP" id="MF_00099">
    <property type="entry name" value="CheB_chemtxs"/>
    <property type="match status" value="1"/>
</dbReference>
<dbReference type="InterPro" id="IPR008248">
    <property type="entry name" value="CheB-like"/>
</dbReference>
<dbReference type="InterPro" id="IPR035909">
    <property type="entry name" value="CheB_C"/>
</dbReference>
<dbReference type="InterPro" id="IPR011006">
    <property type="entry name" value="CheY-like_superfamily"/>
</dbReference>
<dbReference type="InterPro" id="IPR000673">
    <property type="entry name" value="Sig_transdc_resp-reg_Me-estase"/>
</dbReference>
<dbReference type="InterPro" id="IPR001789">
    <property type="entry name" value="Sig_transdc_resp-reg_receiver"/>
</dbReference>
<dbReference type="NCBIfam" id="NF001965">
    <property type="entry name" value="PRK00742.1"/>
    <property type="match status" value="1"/>
</dbReference>
<dbReference type="NCBIfam" id="NF009206">
    <property type="entry name" value="PRK12555.1"/>
    <property type="match status" value="1"/>
</dbReference>
<dbReference type="PANTHER" id="PTHR42872">
    <property type="entry name" value="PROTEIN-GLUTAMATE METHYLESTERASE/PROTEIN-GLUTAMINE GLUTAMINASE"/>
    <property type="match status" value="1"/>
</dbReference>
<dbReference type="PANTHER" id="PTHR42872:SF6">
    <property type="entry name" value="PROTEIN-GLUTAMATE METHYLESTERASE_PROTEIN-GLUTAMINE GLUTAMINASE"/>
    <property type="match status" value="1"/>
</dbReference>
<dbReference type="Pfam" id="PF01339">
    <property type="entry name" value="CheB_methylest"/>
    <property type="match status" value="1"/>
</dbReference>
<dbReference type="Pfam" id="PF00072">
    <property type="entry name" value="Response_reg"/>
    <property type="match status" value="1"/>
</dbReference>
<dbReference type="PIRSF" id="PIRSF000876">
    <property type="entry name" value="RR_chemtxs_CheB"/>
    <property type="match status" value="1"/>
</dbReference>
<dbReference type="SMART" id="SM00448">
    <property type="entry name" value="REC"/>
    <property type="match status" value="1"/>
</dbReference>
<dbReference type="SUPFAM" id="SSF52172">
    <property type="entry name" value="CheY-like"/>
    <property type="match status" value="1"/>
</dbReference>
<dbReference type="SUPFAM" id="SSF52738">
    <property type="entry name" value="Methylesterase CheB, C-terminal domain"/>
    <property type="match status" value="1"/>
</dbReference>
<dbReference type="PROSITE" id="PS50122">
    <property type="entry name" value="CHEB"/>
    <property type="match status" value="1"/>
</dbReference>
<dbReference type="PROSITE" id="PS50110">
    <property type="entry name" value="RESPONSE_REGULATORY"/>
    <property type="match status" value="1"/>
</dbReference>
<reference key="1">
    <citation type="journal article" date="2003" name="Nat. Genet.">
        <title>Comparative analysis of the genome sequences of Bordetella pertussis, Bordetella parapertussis and Bordetella bronchiseptica.</title>
        <authorList>
            <person name="Parkhill J."/>
            <person name="Sebaihia M."/>
            <person name="Preston A."/>
            <person name="Murphy L.D."/>
            <person name="Thomson N.R."/>
            <person name="Harris D.E."/>
            <person name="Holden M.T.G."/>
            <person name="Churcher C.M."/>
            <person name="Bentley S.D."/>
            <person name="Mungall K.L."/>
            <person name="Cerdeno-Tarraga A.-M."/>
            <person name="Temple L."/>
            <person name="James K.D."/>
            <person name="Harris B."/>
            <person name="Quail M.A."/>
            <person name="Achtman M."/>
            <person name="Atkin R."/>
            <person name="Baker S."/>
            <person name="Basham D."/>
            <person name="Bason N."/>
            <person name="Cherevach I."/>
            <person name="Chillingworth T."/>
            <person name="Collins M."/>
            <person name="Cronin A."/>
            <person name="Davis P."/>
            <person name="Doggett J."/>
            <person name="Feltwell T."/>
            <person name="Goble A."/>
            <person name="Hamlin N."/>
            <person name="Hauser H."/>
            <person name="Holroyd S."/>
            <person name="Jagels K."/>
            <person name="Leather S."/>
            <person name="Moule S."/>
            <person name="Norberczak H."/>
            <person name="O'Neil S."/>
            <person name="Ormond D."/>
            <person name="Price C."/>
            <person name="Rabbinowitsch E."/>
            <person name="Rutter S."/>
            <person name="Sanders M."/>
            <person name="Saunders D."/>
            <person name="Seeger K."/>
            <person name="Sharp S."/>
            <person name="Simmonds M."/>
            <person name="Skelton J."/>
            <person name="Squares R."/>
            <person name="Squares S."/>
            <person name="Stevens K."/>
            <person name="Unwin L."/>
            <person name="Whitehead S."/>
            <person name="Barrell B.G."/>
            <person name="Maskell D.J."/>
        </authorList>
    </citation>
    <scope>NUCLEOTIDE SEQUENCE [LARGE SCALE GENOMIC DNA]</scope>
    <source>
        <strain>Tohama I / ATCC BAA-589 / NCTC 13251</strain>
    </source>
</reference>
<accession>Q7VZ94</accession>
<sequence>MKKIKVLCVDDSALVRGLMTEIINSHPDMEVVATAPDPLVARELIKKHNPDVLTLDVEMPRMDGLDFLEKLMRLRPMPVVMVSSLTERGGEITLRALELGAIDFVTKPKLGIRDGLIEYSEVIADKIRAASRARLRALAPASHAAPLRLRSPFASSEKLVIVGASTGGTEAIREVLQPLPADSPAILITQHMLAGFTRSFAQRLDALCAVTVREASDGERVLPGHVYLAPGGETHMRLGRSGANYVIGLQASEPVNRHRPSVDVLFHSAAEAAGGNAIGVILTGMGKDGAAGLLAMKRAGARTMAQDEASCVVFGMPREAIALGAADEVVPLADISERILTRLGDRGHRV</sequence>
<organism>
    <name type="scientific">Bordetella pertussis (strain Tohama I / ATCC BAA-589 / NCTC 13251)</name>
    <dbReference type="NCBI Taxonomy" id="257313"/>
    <lineage>
        <taxon>Bacteria</taxon>
        <taxon>Pseudomonadati</taxon>
        <taxon>Pseudomonadota</taxon>
        <taxon>Betaproteobacteria</taxon>
        <taxon>Burkholderiales</taxon>
        <taxon>Alcaligenaceae</taxon>
        <taxon>Bordetella</taxon>
    </lineage>
</organism>
<gene>
    <name evidence="1" type="primary">cheB</name>
    <name type="ordered locus">BP1032</name>
</gene>
<comment type="function">
    <text evidence="1">Involved in chemotaxis. Part of a chemotaxis signal transduction system that modulates chemotaxis in response to various stimuli. Catalyzes the demethylation of specific methylglutamate residues introduced into the chemoreceptors (methyl-accepting chemotaxis proteins or MCP) by CheR. Also mediates the irreversible deamidation of specific glutamine residues to glutamic acid.</text>
</comment>
<comment type="catalytic activity">
    <reaction evidence="1">
        <text>[protein]-L-glutamate 5-O-methyl ester + H2O = L-glutamyl-[protein] + methanol + H(+)</text>
        <dbReference type="Rhea" id="RHEA:23236"/>
        <dbReference type="Rhea" id="RHEA-COMP:10208"/>
        <dbReference type="Rhea" id="RHEA-COMP:10311"/>
        <dbReference type="ChEBI" id="CHEBI:15377"/>
        <dbReference type="ChEBI" id="CHEBI:15378"/>
        <dbReference type="ChEBI" id="CHEBI:17790"/>
        <dbReference type="ChEBI" id="CHEBI:29973"/>
        <dbReference type="ChEBI" id="CHEBI:82795"/>
        <dbReference type="EC" id="3.1.1.61"/>
    </reaction>
</comment>
<comment type="catalytic activity">
    <reaction evidence="1">
        <text>L-glutaminyl-[protein] + H2O = L-glutamyl-[protein] + NH4(+)</text>
        <dbReference type="Rhea" id="RHEA:16441"/>
        <dbReference type="Rhea" id="RHEA-COMP:10207"/>
        <dbReference type="Rhea" id="RHEA-COMP:10208"/>
        <dbReference type="ChEBI" id="CHEBI:15377"/>
        <dbReference type="ChEBI" id="CHEBI:28938"/>
        <dbReference type="ChEBI" id="CHEBI:29973"/>
        <dbReference type="ChEBI" id="CHEBI:30011"/>
        <dbReference type="EC" id="3.5.1.44"/>
    </reaction>
</comment>
<comment type="subcellular location">
    <subcellularLocation>
        <location evidence="1">Cytoplasm</location>
    </subcellularLocation>
</comment>
<comment type="domain">
    <text evidence="1">Contains a C-terminal catalytic domain, and an N-terminal region which modulates catalytic activity.</text>
</comment>
<comment type="PTM">
    <text evidence="1">Phosphorylated by CheA. Phosphorylation of the N-terminal regulatory domain activates the methylesterase activity.</text>
</comment>
<comment type="similarity">
    <text evidence="1">Belongs to the CheB family.</text>
</comment>
<evidence type="ECO:0000255" key="1">
    <source>
        <dbReference type="HAMAP-Rule" id="MF_00099"/>
    </source>
</evidence>
<keyword id="KW-0145">Chemotaxis</keyword>
<keyword id="KW-0963">Cytoplasm</keyword>
<keyword id="KW-0378">Hydrolase</keyword>
<keyword id="KW-0597">Phosphoprotein</keyword>
<keyword id="KW-1185">Reference proteome</keyword>
<feature type="chain" id="PRO_0000157981" description="Protein-glutamate methylesterase/protein-glutamine glutaminase">
    <location>
        <begin position="1"/>
        <end position="350"/>
    </location>
</feature>
<feature type="domain" description="Response regulatory" evidence="1">
    <location>
        <begin position="5"/>
        <end position="122"/>
    </location>
</feature>
<feature type="domain" description="CheB-type methylesterase" evidence="1">
    <location>
        <begin position="152"/>
        <end position="346"/>
    </location>
</feature>
<feature type="active site" evidence="1">
    <location>
        <position position="165"/>
    </location>
</feature>
<feature type="active site" evidence="1">
    <location>
        <position position="191"/>
    </location>
</feature>
<feature type="active site" evidence="1">
    <location>
        <position position="288"/>
    </location>
</feature>
<feature type="modified residue" description="4-aspartylphosphate" evidence="1">
    <location>
        <position position="56"/>
    </location>
</feature>